<keyword id="KW-1185">Reference proteome</keyword>
<keyword id="KW-0687">Ribonucleoprotein</keyword>
<keyword id="KW-0689">Ribosomal protein</keyword>
<keyword id="KW-0694">RNA-binding</keyword>
<keyword id="KW-0699">rRNA-binding</keyword>
<feature type="chain" id="PRO_1000086727" description="Large ribosomal subunit protein uL15">
    <location>
        <begin position="1"/>
        <end position="144"/>
    </location>
</feature>
<feature type="region of interest" description="Disordered" evidence="2">
    <location>
        <begin position="1"/>
        <end position="54"/>
    </location>
</feature>
<feature type="compositionally biased region" description="Gly residues" evidence="2">
    <location>
        <begin position="21"/>
        <end position="31"/>
    </location>
</feature>
<evidence type="ECO:0000255" key="1">
    <source>
        <dbReference type="HAMAP-Rule" id="MF_01341"/>
    </source>
</evidence>
<evidence type="ECO:0000256" key="2">
    <source>
        <dbReference type="SAM" id="MobiDB-lite"/>
    </source>
</evidence>
<evidence type="ECO:0000305" key="3"/>
<comment type="function">
    <text evidence="1">Binds to the 23S rRNA.</text>
</comment>
<comment type="subunit">
    <text evidence="1">Part of the 50S ribosomal subunit.</text>
</comment>
<comment type="similarity">
    <text evidence="1">Belongs to the universal ribosomal protein uL15 family.</text>
</comment>
<name>RL15_SALAR</name>
<organism>
    <name type="scientific">Salmonella arizonae (strain ATCC BAA-731 / CDC346-86 / RSK2980)</name>
    <dbReference type="NCBI Taxonomy" id="41514"/>
    <lineage>
        <taxon>Bacteria</taxon>
        <taxon>Pseudomonadati</taxon>
        <taxon>Pseudomonadota</taxon>
        <taxon>Gammaproteobacteria</taxon>
        <taxon>Enterobacterales</taxon>
        <taxon>Enterobacteriaceae</taxon>
        <taxon>Salmonella</taxon>
    </lineage>
</organism>
<sequence>MRLNTLSPAEGSKKAGKRLGRGIGSGLGKTGGRGHKGQKSRSGGGVRRGFEGGQMPLYRRLPKFGFTSRKAAITAEVRLSDLAKVEGGVVDLNTLKATNIIGIQIEFAKVILAGEVTTPVTVRGLRVTKGARAAIEAAGGKIEE</sequence>
<protein>
    <recommendedName>
        <fullName evidence="1">Large ribosomal subunit protein uL15</fullName>
    </recommendedName>
    <alternativeName>
        <fullName evidence="3">50S ribosomal protein L15</fullName>
    </alternativeName>
</protein>
<gene>
    <name evidence="1" type="primary">rplO</name>
    <name type="ordered locus">SARI_04209</name>
</gene>
<reference key="1">
    <citation type="submission" date="2007-11" db="EMBL/GenBank/DDBJ databases">
        <authorList>
            <consortium name="The Salmonella enterica serovar Arizonae Genome Sequencing Project"/>
            <person name="McClelland M."/>
            <person name="Sanderson E.K."/>
            <person name="Porwollik S."/>
            <person name="Spieth J."/>
            <person name="Clifton W.S."/>
            <person name="Fulton R."/>
            <person name="Chunyan W."/>
            <person name="Wollam A."/>
            <person name="Shah N."/>
            <person name="Pepin K."/>
            <person name="Bhonagiri V."/>
            <person name="Nash W."/>
            <person name="Johnson M."/>
            <person name="Thiruvilangam P."/>
            <person name="Wilson R."/>
        </authorList>
    </citation>
    <scope>NUCLEOTIDE SEQUENCE [LARGE SCALE GENOMIC DNA]</scope>
    <source>
        <strain>ATCC BAA-731 / CDC346-86 / RSK2980</strain>
    </source>
</reference>
<proteinExistence type="inferred from homology"/>
<accession>A9MN68</accession>
<dbReference type="EMBL" id="CP000880">
    <property type="protein sequence ID" value="ABX23998.1"/>
    <property type="molecule type" value="Genomic_DNA"/>
</dbReference>
<dbReference type="SMR" id="A9MN68"/>
<dbReference type="STRING" id="41514.SARI_04209"/>
<dbReference type="KEGG" id="ses:SARI_04209"/>
<dbReference type="HOGENOM" id="CLU_055188_4_2_6"/>
<dbReference type="Proteomes" id="UP000002084">
    <property type="component" value="Chromosome"/>
</dbReference>
<dbReference type="GO" id="GO:0022625">
    <property type="term" value="C:cytosolic large ribosomal subunit"/>
    <property type="evidence" value="ECO:0007669"/>
    <property type="project" value="TreeGrafter"/>
</dbReference>
<dbReference type="GO" id="GO:0019843">
    <property type="term" value="F:rRNA binding"/>
    <property type="evidence" value="ECO:0007669"/>
    <property type="project" value="UniProtKB-UniRule"/>
</dbReference>
<dbReference type="GO" id="GO:0003735">
    <property type="term" value="F:structural constituent of ribosome"/>
    <property type="evidence" value="ECO:0007669"/>
    <property type="project" value="InterPro"/>
</dbReference>
<dbReference type="GO" id="GO:0006412">
    <property type="term" value="P:translation"/>
    <property type="evidence" value="ECO:0007669"/>
    <property type="project" value="UniProtKB-UniRule"/>
</dbReference>
<dbReference type="FunFam" id="3.100.10.10:FF:000003">
    <property type="entry name" value="50S ribosomal protein L15"/>
    <property type="match status" value="1"/>
</dbReference>
<dbReference type="Gene3D" id="3.100.10.10">
    <property type="match status" value="1"/>
</dbReference>
<dbReference type="HAMAP" id="MF_01341">
    <property type="entry name" value="Ribosomal_uL15"/>
    <property type="match status" value="1"/>
</dbReference>
<dbReference type="InterPro" id="IPR030878">
    <property type="entry name" value="Ribosomal_uL15"/>
</dbReference>
<dbReference type="InterPro" id="IPR021131">
    <property type="entry name" value="Ribosomal_uL15/eL18"/>
</dbReference>
<dbReference type="InterPro" id="IPR036227">
    <property type="entry name" value="Ribosomal_uL15/eL18_sf"/>
</dbReference>
<dbReference type="InterPro" id="IPR005749">
    <property type="entry name" value="Ribosomal_uL15_bac-type"/>
</dbReference>
<dbReference type="InterPro" id="IPR001196">
    <property type="entry name" value="Ribosomal_uL15_CS"/>
</dbReference>
<dbReference type="NCBIfam" id="TIGR01071">
    <property type="entry name" value="rplO_bact"/>
    <property type="match status" value="1"/>
</dbReference>
<dbReference type="PANTHER" id="PTHR12934">
    <property type="entry name" value="50S RIBOSOMAL PROTEIN L15"/>
    <property type="match status" value="1"/>
</dbReference>
<dbReference type="PANTHER" id="PTHR12934:SF11">
    <property type="entry name" value="LARGE RIBOSOMAL SUBUNIT PROTEIN UL15M"/>
    <property type="match status" value="1"/>
</dbReference>
<dbReference type="Pfam" id="PF00828">
    <property type="entry name" value="Ribosomal_L27A"/>
    <property type="match status" value="1"/>
</dbReference>
<dbReference type="SUPFAM" id="SSF52080">
    <property type="entry name" value="Ribosomal proteins L15p and L18e"/>
    <property type="match status" value="1"/>
</dbReference>
<dbReference type="PROSITE" id="PS00475">
    <property type="entry name" value="RIBOSOMAL_L15"/>
    <property type="match status" value="1"/>
</dbReference>